<gene>
    <name type="primary">acyP</name>
    <name type="ordered locus">PSPA7_4554</name>
</gene>
<name>ACYP_PSEP7</name>
<reference key="1">
    <citation type="submission" date="2007-06" db="EMBL/GenBank/DDBJ databases">
        <authorList>
            <person name="Dodson R.J."/>
            <person name="Harkins D."/>
            <person name="Paulsen I.T."/>
        </authorList>
    </citation>
    <scope>NUCLEOTIDE SEQUENCE [LARGE SCALE GENOMIC DNA]</scope>
    <source>
        <strain>DSM 24068 / PA7</strain>
    </source>
</reference>
<sequence>MARICLHAYVGGRVQGVGFRQSTRDEAERLGLDGWVRNLEDGRVEVLWEGEEEQVKALQRWLERGPRRARVAGVEVEALPLQGIAGFIVRR</sequence>
<feature type="chain" id="PRO_0000326772" description="Acylphosphatase">
    <location>
        <begin position="1"/>
        <end position="91"/>
    </location>
</feature>
<feature type="domain" description="Acylphosphatase-like" evidence="1">
    <location>
        <begin position="5"/>
        <end position="91"/>
    </location>
</feature>
<feature type="active site" evidence="1">
    <location>
        <position position="20"/>
    </location>
</feature>
<feature type="active site" evidence="1">
    <location>
        <position position="38"/>
    </location>
</feature>
<organism>
    <name type="scientific">Pseudomonas paraeruginosa (strain DSM 24068 / PA7)</name>
    <name type="common">Pseudomonas aeruginosa (strain PA7)</name>
    <dbReference type="NCBI Taxonomy" id="381754"/>
    <lineage>
        <taxon>Bacteria</taxon>
        <taxon>Pseudomonadati</taxon>
        <taxon>Pseudomonadota</taxon>
        <taxon>Gammaproteobacteria</taxon>
        <taxon>Pseudomonadales</taxon>
        <taxon>Pseudomonadaceae</taxon>
        <taxon>Pseudomonas</taxon>
        <taxon>Pseudomonas paraeruginosa</taxon>
    </lineage>
</organism>
<proteinExistence type="inferred from homology"/>
<comment type="catalytic activity">
    <reaction>
        <text>an acyl phosphate + H2O = a carboxylate + phosphate + H(+)</text>
        <dbReference type="Rhea" id="RHEA:14965"/>
        <dbReference type="ChEBI" id="CHEBI:15377"/>
        <dbReference type="ChEBI" id="CHEBI:15378"/>
        <dbReference type="ChEBI" id="CHEBI:29067"/>
        <dbReference type="ChEBI" id="CHEBI:43474"/>
        <dbReference type="ChEBI" id="CHEBI:59918"/>
        <dbReference type="EC" id="3.6.1.7"/>
    </reaction>
</comment>
<comment type="similarity">
    <text evidence="2">Belongs to the acylphosphatase family.</text>
</comment>
<comment type="sequence caution" evidence="2">
    <conflict type="erroneous initiation">
        <sequence resource="EMBL-CDS" id="ABR85201"/>
    </conflict>
</comment>
<accession>A6VA18</accession>
<protein>
    <recommendedName>
        <fullName>Acylphosphatase</fullName>
        <ecNumber>3.6.1.7</ecNumber>
    </recommendedName>
    <alternativeName>
        <fullName>Acylphosphate phosphohydrolase</fullName>
    </alternativeName>
</protein>
<dbReference type="EC" id="3.6.1.7"/>
<dbReference type="EMBL" id="CP000744">
    <property type="protein sequence ID" value="ABR85201.1"/>
    <property type="status" value="ALT_INIT"/>
    <property type="molecule type" value="Genomic_DNA"/>
</dbReference>
<dbReference type="RefSeq" id="WP_003155968.1">
    <property type="nucleotide sequence ID" value="NC_009656.1"/>
</dbReference>
<dbReference type="SMR" id="A6VA18"/>
<dbReference type="KEGG" id="pap:PSPA7_4554"/>
<dbReference type="HOGENOM" id="CLU_141932_3_2_6"/>
<dbReference type="Proteomes" id="UP000001582">
    <property type="component" value="Chromosome"/>
</dbReference>
<dbReference type="GO" id="GO:0003998">
    <property type="term" value="F:acylphosphatase activity"/>
    <property type="evidence" value="ECO:0007669"/>
    <property type="project" value="UniProtKB-EC"/>
</dbReference>
<dbReference type="Gene3D" id="3.30.70.100">
    <property type="match status" value="1"/>
</dbReference>
<dbReference type="InterPro" id="IPR020456">
    <property type="entry name" value="Acylphosphatase"/>
</dbReference>
<dbReference type="InterPro" id="IPR001792">
    <property type="entry name" value="Acylphosphatase-like_dom"/>
</dbReference>
<dbReference type="InterPro" id="IPR036046">
    <property type="entry name" value="Acylphosphatase-like_dom_sf"/>
</dbReference>
<dbReference type="InterPro" id="IPR017968">
    <property type="entry name" value="Acylphosphatase_CS"/>
</dbReference>
<dbReference type="NCBIfam" id="NF011000">
    <property type="entry name" value="PRK14426.1"/>
    <property type="match status" value="1"/>
</dbReference>
<dbReference type="NCBIfam" id="NF011014">
    <property type="entry name" value="PRK14442.1"/>
    <property type="match status" value="1"/>
</dbReference>
<dbReference type="NCBIfam" id="NF011022">
    <property type="entry name" value="PRK14451.1"/>
    <property type="match status" value="1"/>
</dbReference>
<dbReference type="PANTHER" id="PTHR47268">
    <property type="entry name" value="ACYLPHOSPHATASE"/>
    <property type="match status" value="1"/>
</dbReference>
<dbReference type="PANTHER" id="PTHR47268:SF4">
    <property type="entry name" value="ACYLPHOSPHATASE"/>
    <property type="match status" value="1"/>
</dbReference>
<dbReference type="Pfam" id="PF00708">
    <property type="entry name" value="Acylphosphatase"/>
    <property type="match status" value="1"/>
</dbReference>
<dbReference type="PRINTS" id="PR00112">
    <property type="entry name" value="ACYLPHPHTASE"/>
</dbReference>
<dbReference type="SUPFAM" id="SSF54975">
    <property type="entry name" value="Acylphosphatase/BLUF domain-like"/>
    <property type="match status" value="1"/>
</dbReference>
<dbReference type="PROSITE" id="PS00150">
    <property type="entry name" value="ACYLPHOSPHATASE_1"/>
    <property type="match status" value="1"/>
</dbReference>
<dbReference type="PROSITE" id="PS00151">
    <property type="entry name" value="ACYLPHOSPHATASE_2"/>
    <property type="match status" value="1"/>
</dbReference>
<dbReference type="PROSITE" id="PS51160">
    <property type="entry name" value="ACYLPHOSPHATASE_3"/>
    <property type="match status" value="1"/>
</dbReference>
<keyword id="KW-0378">Hydrolase</keyword>
<evidence type="ECO:0000255" key="1">
    <source>
        <dbReference type="PROSITE-ProRule" id="PRU00520"/>
    </source>
</evidence>
<evidence type="ECO:0000305" key="2"/>